<keyword id="KW-1185">Reference proteome</keyword>
<keyword id="KW-0678">Repressor</keyword>
<keyword id="KW-0687">Ribonucleoprotein</keyword>
<keyword id="KW-0689">Ribosomal protein</keyword>
<keyword id="KW-0694">RNA-binding</keyword>
<keyword id="KW-0699">rRNA-binding</keyword>
<keyword id="KW-0810">Translation regulation</keyword>
<keyword id="KW-0820">tRNA-binding</keyword>
<protein>
    <recommendedName>
        <fullName evidence="1">Large ribosomal subunit protein uL1</fullName>
    </recommendedName>
    <alternativeName>
        <fullName evidence="2">50S ribosomal protein L1</fullName>
    </alternativeName>
</protein>
<feature type="chain" id="PRO_0000125685" description="Large ribosomal subunit protein uL1">
    <location>
        <begin position="1"/>
        <end position="231"/>
    </location>
</feature>
<organism>
    <name type="scientific">Methylococcus capsulatus (strain ATCC 33009 / NCIMB 11132 / Bath)</name>
    <dbReference type="NCBI Taxonomy" id="243233"/>
    <lineage>
        <taxon>Bacteria</taxon>
        <taxon>Pseudomonadati</taxon>
        <taxon>Pseudomonadota</taxon>
        <taxon>Gammaproteobacteria</taxon>
        <taxon>Methylococcales</taxon>
        <taxon>Methylococcaceae</taxon>
        <taxon>Methylococcus</taxon>
    </lineage>
</organism>
<dbReference type="EMBL" id="AE017282">
    <property type="protein sequence ID" value="AAU92679.1"/>
    <property type="molecule type" value="Genomic_DNA"/>
</dbReference>
<dbReference type="RefSeq" id="WP_010960363.1">
    <property type="nucleotide sequence ID" value="NC_002977.6"/>
</dbReference>
<dbReference type="SMR" id="Q60A09"/>
<dbReference type="STRING" id="243233.MCA1063"/>
<dbReference type="GeneID" id="88223360"/>
<dbReference type="KEGG" id="mca:MCA1063"/>
<dbReference type="eggNOG" id="COG0081">
    <property type="taxonomic scope" value="Bacteria"/>
</dbReference>
<dbReference type="HOGENOM" id="CLU_062853_0_0_6"/>
<dbReference type="Proteomes" id="UP000006821">
    <property type="component" value="Chromosome"/>
</dbReference>
<dbReference type="GO" id="GO:0022625">
    <property type="term" value="C:cytosolic large ribosomal subunit"/>
    <property type="evidence" value="ECO:0007669"/>
    <property type="project" value="TreeGrafter"/>
</dbReference>
<dbReference type="GO" id="GO:0019843">
    <property type="term" value="F:rRNA binding"/>
    <property type="evidence" value="ECO:0007669"/>
    <property type="project" value="UniProtKB-UniRule"/>
</dbReference>
<dbReference type="GO" id="GO:0003735">
    <property type="term" value="F:structural constituent of ribosome"/>
    <property type="evidence" value="ECO:0007669"/>
    <property type="project" value="InterPro"/>
</dbReference>
<dbReference type="GO" id="GO:0000049">
    <property type="term" value="F:tRNA binding"/>
    <property type="evidence" value="ECO:0007669"/>
    <property type="project" value="UniProtKB-KW"/>
</dbReference>
<dbReference type="GO" id="GO:0006417">
    <property type="term" value="P:regulation of translation"/>
    <property type="evidence" value="ECO:0007669"/>
    <property type="project" value="UniProtKB-KW"/>
</dbReference>
<dbReference type="GO" id="GO:0006412">
    <property type="term" value="P:translation"/>
    <property type="evidence" value="ECO:0007669"/>
    <property type="project" value="UniProtKB-UniRule"/>
</dbReference>
<dbReference type="CDD" id="cd00403">
    <property type="entry name" value="Ribosomal_L1"/>
    <property type="match status" value="1"/>
</dbReference>
<dbReference type="FunFam" id="3.40.50.790:FF:000001">
    <property type="entry name" value="50S ribosomal protein L1"/>
    <property type="match status" value="1"/>
</dbReference>
<dbReference type="Gene3D" id="3.30.190.20">
    <property type="match status" value="1"/>
</dbReference>
<dbReference type="Gene3D" id="3.40.50.790">
    <property type="match status" value="1"/>
</dbReference>
<dbReference type="HAMAP" id="MF_01318_B">
    <property type="entry name" value="Ribosomal_uL1_B"/>
    <property type="match status" value="1"/>
</dbReference>
<dbReference type="InterPro" id="IPR005878">
    <property type="entry name" value="Ribosom_uL1_bac-type"/>
</dbReference>
<dbReference type="InterPro" id="IPR002143">
    <property type="entry name" value="Ribosomal_uL1"/>
</dbReference>
<dbReference type="InterPro" id="IPR023674">
    <property type="entry name" value="Ribosomal_uL1-like"/>
</dbReference>
<dbReference type="InterPro" id="IPR028364">
    <property type="entry name" value="Ribosomal_uL1/biogenesis"/>
</dbReference>
<dbReference type="InterPro" id="IPR016095">
    <property type="entry name" value="Ribosomal_uL1_3-a/b-sand"/>
</dbReference>
<dbReference type="InterPro" id="IPR023673">
    <property type="entry name" value="Ribosomal_uL1_CS"/>
</dbReference>
<dbReference type="NCBIfam" id="TIGR01169">
    <property type="entry name" value="rplA_bact"/>
    <property type="match status" value="1"/>
</dbReference>
<dbReference type="PANTHER" id="PTHR36427">
    <property type="entry name" value="54S RIBOSOMAL PROTEIN L1, MITOCHONDRIAL"/>
    <property type="match status" value="1"/>
</dbReference>
<dbReference type="PANTHER" id="PTHR36427:SF3">
    <property type="entry name" value="LARGE RIBOSOMAL SUBUNIT PROTEIN UL1M"/>
    <property type="match status" value="1"/>
</dbReference>
<dbReference type="Pfam" id="PF00687">
    <property type="entry name" value="Ribosomal_L1"/>
    <property type="match status" value="1"/>
</dbReference>
<dbReference type="PIRSF" id="PIRSF002155">
    <property type="entry name" value="Ribosomal_L1"/>
    <property type="match status" value="1"/>
</dbReference>
<dbReference type="SUPFAM" id="SSF56808">
    <property type="entry name" value="Ribosomal protein L1"/>
    <property type="match status" value="1"/>
</dbReference>
<dbReference type="PROSITE" id="PS01199">
    <property type="entry name" value="RIBOSOMAL_L1"/>
    <property type="match status" value="1"/>
</dbReference>
<evidence type="ECO:0000255" key="1">
    <source>
        <dbReference type="HAMAP-Rule" id="MF_01318"/>
    </source>
</evidence>
<evidence type="ECO:0000305" key="2"/>
<accession>Q60A09</accession>
<sequence length="231" mass="24003">MARLTKRLKSIKDKVQPGKVYAIDDAFEVLKSVSSVKFVESVDVAVNLGVDPRKSDQAVRGATVLPHGTGKSVRVAVFAQGANAEAALAAGADIVGMDDLGAQVKAGELNFDVVIAAPDAMRVVGQLGQILGPRGLMPNPKTGTVTPDVATAVKNAKAGQVRYRTDKKGIIHCTIGKISFDSAALKENLEALLADLKKLKPSTAKGVYVKKITVSSTMGPGLAVDQSTLAA</sequence>
<name>RL1_METCA</name>
<comment type="function">
    <text evidence="1">Binds directly to 23S rRNA. The L1 stalk is quite mobile in the ribosome, and is involved in E site tRNA release.</text>
</comment>
<comment type="function">
    <text evidence="1">Protein L1 is also a translational repressor protein, it controls the translation of the L11 operon by binding to its mRNA.</text>
</comment>
<comment type="subunit">
    <text evidence="1">Part of the 50S ribosomal subunit.</text>
</comment>
<comment type="similarity">
    <text evidence="1">Belongs to the universal ribosomal protein uL1 family.</text>
</comment>
<proteinExistence type="inferred from homology"/>
<reference key="1">
    <citation type="journal article" date="2004" name="PLoS Biol.">
        <title>Genomic insights into methanotrophy: the complete genome sequence of Methylococcus capsulatus (Bath).</title>
        <authorList>
            <person name="Ward N.L."/>
            <person name="Larsen O."/>
            <person name="Sakwa J."/>
            <person name="Bruseth L."/>
            <person name="Khouri H.M."/>
            <person name="Durkin A.S."/>
            <person name="Dimitrov G."/>
            <person name="Jiang L."/>
            <person name="Scanlan D."/>
            <person name="Kang K.H."/>
            <person name="Lewis M.R."/>
            <person name="Nelson K.E."/>
            <person name="Methe B.A."/>
            <person name="Wu M."/>
            <person name="Heidelberg J.F."/>
            <person name="Paulsen I.T."/>
            <person name="Fouts D.E."/>
            <person name="Ravel J."/>
            <person name="Tettelin H."/>
            <person name="Ren Q."/>
            <person name="Read T.D."/>
            <person name="DeBoy R.T."/>
            <person name="Seshadri R."/>
            <person name="Salzberg S.L."/>
            <person name="Jensen H.B."/>
            <person name="Birkeland N.K."/>
            <person name="Nelson W.C."/>
            <person name="Dodson R.J."/>
            <person name="Grindhaug S.H."/>
            <person name="Holt I.E."/>
            <person name="Eidhammer I."/>
            <person name="Jonasen I."/>
            <person name="Vanaken S."/>
            <person name="Utterback T.R."/>
            <person name="Feldblyum T.V."/>
            <person name="Fraser C.M."/>
            <person name="Lillehaug J.R."/>
            <person name="Eisen J.A."/>
        </authorList>
    </citation>
    <scope>NUCLEOTIDE SEQUENCE [LARGE SCALE GENOMIC DNA]</scope>
    <source>
        <strain>ATCC 33009 / NCIMB 11132 / Bath</strain>
    </source>
</reference>
<gene>
    <name evidence="1" type="primary">rplA</name>
    <name type="ordered locus">MCA1063</name>
</gene>